<accession>Q0ASQ1</accession>
<name>PHNC_MARMM</name>
<dbReference type="EC" id="7.3.2.2" evidence="1"/>
<dbReference type="EMBL" id="CP000449">
    <property type="protein sequence ID" value="ABI64686.1"/>
    <property type="molecule type" value="Genomic_DNA"/>
</dbReference>
<dbReference type="RefSeq" id="WP_011642333.1">
    <property type="nucleotide sequence ID" value="NC_008347.1"/>
</dbReference>
<dbReference type="SMR" id="Q0ASQ1"/>
<dbReference type="STRING" id="394221.Mmar10_0393"/>
<dbReference type="KEGG" id="mmr:Mmar10_0393"/>
<dbReference type="eggNOG" id="COG3638">
    <property type="taxonomic scope" value="Bacteria"/>
</dbReference>
<dbReference type="HOGENOM" id="CLU_000604_1_22_5"/>
<dbReference type="OrthoDB" id="7627620at2"/>
<dbReference type="Proteomes" id="UP000001964">
    <property type="component" value="Chromosome"/>
</dbReference>
<dbReference type="GO" id="GO:0005886">
    <property type="term" value="C:plasma membrane"/>
    <property type="evidence" value="ECO:0007669"/>
    <property type="project" value="UniProtKB-SubCell"/>
</dbReference>
<dbReference type="GO" id="GO:0015416">
    <property type="term" value="F:ABC-type phosphonate transporter activity"/>
    <property type="evidence" value="ECO:0007669"/>
    <property type="project" value="UniProtKB-EC"/>
</dbReference>
<dbReference type="GO" id="GO:0005524">
    <property type="term" value="F:ATP binding"/>
    <property type="evidence" value="ECO:0007669"/>
    <property type="project" value="UniProtKB-KW"/>
</dbReference>
<dbReference type="GO" id="GO:0016887">
    <property type="term" value="F:ATP hydrolysis activity"/>
    <property type="evidence" value="ECO:0007669"/>
    <property type="project" value="InterPro"/>
</dbReference>
<dbReference type="CDD" id="cd03256">
    <property type="entry name" value="ABC_PhnC_transporter"/>
    <property type="match status" value="1"/>
</dbReference>
<dbReference type="Gene3D" id="3.40.50.300">
    <property type="entry name" value="P-loop containing nucleotide triphosphate hydrolases"/>
    <property type="match status" value="1"/>
</dbReference>
<dbReference type="InterPro" id="IPR003593">
    <property type="entry name" value="AAA+_ATPase"/>
</dbReference>
<dbReference type="InterPro" id="IPR003439">
    <property type="entry name" value="ABC_transporter-like_ATP-bd"/>
</dbReference>
<dbReference type="InterPro" id="IPR012693">
    <property type="entry name" value="ABC_transpr_PhnC"/>
</dbReference>
<dbReference type="InterPro" id="IPR050086">
    <property type="entry name" value="MetN_ABC_transporter-like"/>
</dbReference>
<dbReference type="InterPro" id="IPR027417">
    <property type="entry name" value="P-loop_NTPase"/>
</dbReference>
<dbReference type="NCBIfam" id="TIGR02315">
    <property type="entry name" value="ABC_phnC"/>
    <property type="match status" value="1"/>
</dbReference>
<dbReference type="PANTHER" id="PTHR43166">
    <property type="entry name" value="AMINO ACID IMPORT ATP-BINDING PROTEIN"/>
    <property type="match status" value="1"/>
</dbReference>
<dbReference type="PANTHER" id="PTHR43166:SF6">
    <property type="entry name" value="PHOSPHONATES IMPORT ATP-BINDING PROTEIN PHNC"/>
    <property type="match status" value="1"/>
</dbReference>
<dbReference type="Pfam" id="PF00005">
    <property type="entry name" value="ABC_tran"/>
    <property type="match status" value="1"/>
</dbReference>
<dbReference type="SMART" id="SM00382">
    <property type="entry name" value="AAA"/>
    <property type="match status" value="1"/>
</dbReference>
<dbReference type="SUPFAM" id="SSF52540">
    <property type="entry name" value="P-loop containing nucleoside triphosphate hydrolases"/>
    <property type="match status" value="1"/>
</dbReference>
<dbReference type="PROSITE" id="PS50893">
    <property type="entry name" value="ABC_TRANSPORTER_2"/>
    <property type="match status" value="1"/>
</dbReference>
<dbReference type="PROSITE" id="PS51249">
    <property type="entry name" value="PHNC"/>
    <property type="match status" value="1"/>
</dbReference>
<sequence length="264" mass="28313">MTDAALALQAENLRMTFGETKALDDVSLSVKPGEMVALIGPSGSGKSTLLRVAAALQVADAESGPVSVLGKTMQQRGKLSGRVQRNRIQLGFIFQQFNLVGRLSLFQNVLVGALGRLPTWRGVLGIFPDDVKQSAMDALTRVGVESFAARRASNLSGGQQQRGAIARALVQGAQVLFADEPIASLDPVSARKVMETLRELNKDDGLTVVVTLHQVDYAKRFCDRIVALNKGRVVYDGPADGLSRDKLIEIYGPEFETAFEGGDA</sequence>
<feature type="chain" id="PRO_0000274721" description="Phosphonates import ATP-binding protein PhnC">
    <location>
        <begin position="1"/>
        <end position="264"/>
    </location>
</feature>
<feature type="domain" description="ABC transporter" evidence="1">
    <location>
        <begin position="8"/>
        <end position="255"/>
    </location>
</feature>
<feature type="binding site" evidence="1">
    <location>
        <begin position="40"/>
        <end position="47"/>
    </location>
    <ligand>
        <name>ATP</name>
        <dbReference type="ChEBI" id="CHEBI:30616"/>
    </ligand>
</feature>
<proteinExistence type="inferred from homology"/>
<evidence type="ECO:0000255" key="1">
    <source>
        <dbReference type="HAMAP-Rule" id="MF_01713"/>
    </source>
</evidence>
<gene>
    <name evidence="1" type="primary">phnC</name>
    <name type="ordered locus">Mmar10_0393</name>
</gene>
<comment type="function">
    <text evidence="1">Part of the ABC transporter complex PhnCDE involved in phosphonates import. Responsible for energy coupling to the transport system.</text>
</comment>
<comment type="catalytic activity">
    <reaction evidence="1">
        <text>phosphonate(out) + ATP + H2O = phosphonate(in) + ADP + phosphate + H(+)</text>
        <dbReference type="Rhea" id="RHEA:18065"/>
        <dbReference type="ChEBI" id="CHEBI:15377"/>
        <dbReference type="ChEBI" id="CHEBI:15378"/>
        <dbReference type="ChEBI" id="CHEBI:16215"/>
        <dbReference type="ChEBI" id="CHEBI:30616"/>
        <dbReference type="ChEBI" id="CHEBI:43474"/>
        <dbReference type="ChEBI" id="CHEBI:456216"/>
        <dbReference type="EC" id="7.3.2.2"/>
    </reaction>
</comment>
<comment type="subunit">
    <text evidence="1">The complex is composed of two ATP-binding proteins (PhnC), two transmembrane proteins (PhnE) and a solute-binding protein (PhnD).</text>
</comment>
<comment type="subcellular location">
    <subcellularLocation>
        <location evidence="1">Cell inner membrane</location>
        <topology evidence="1">Peripheral membrane protein</topology>
    </subcellularLocation>
</comment>
<comment type="similarity">
    <text evidence="1">Belongs to the ABC transporter superfamily. Phosphonates importer (TC 3.A.1.9.1) family.</text>
</comment>
<keyword id="KW-0067">ATP-binding</keyword>
<keyword id="KW-0997">Cell inner membrane</keyword>
<keyword id="KW-1003">Cell membrane</keyword>
<keyword id="KW-0472">Membrane</keyword>
<keyword id="KW-0547">Nucleotide-binding</keyword>
<keyword id="KW-0918">Phosphonate transport</keyword>
<keyword id="KW-1185">Reference proteome</keyword>
<keyword id="KW-1278">Translocase</keyword>
<keyword id="KW-0813">Transport</keyword>
<reference key="1">
    <citation type="submission" date="2006-08" db="EMBL/GenBank/DDBJ databases">
        <title>Complete sequence of Maricaulis maris MCS10.</title>
        <authorList>
            <consortium name="US DOE Joint Genome Institute"/>
            <person name="Copeland A."/>
            <person name="Lucas S."/>
            <person name="Lapidus A."/>
            <person name="Barry K."/>
            <person name="Detter J.C."/>
            <person name="Glavina del Rio T."/>
            <person name="Hammon N."/>
            <person name="Israni S."/>
            <person name="Dalin E."/>
            <person name="Tice H."/>
            <person name="Pitluck S."/>
            <person name="Saunders E."/>
            <person name="Brettin T."/>
            <person name="Bruce D."/>
            <person name="Han C."/>
            <person name="Tapia R."/>
            <person name="Gilna P."/>
            <person name="Schmutz J."/>
            <person name="Larimer F."/>
            <person name="Land M."/>
            <person name="Hauser L."/>
            <person name="Kyrpides N."/>
            <person name="Mikhailova N."/>
            <person name="Viollier P."/>
            <person name="Stephens C."/>
            <person name="Richardson P."/>
        </authorList>
    </citation>
    <scope>NUCLEOTIDE SEQUENCE [LARGE SCALE GENOMIC DNA]</scope>
    <source>
        <strain>MCS10</strain>
    </source>
</reference>
<protein>
    <recommendedName>
        <fullName evidence="1">Phosphonates import ATP-binding protein PhnC</fullName>
        <ecNumber evidence="1">7.3.2.2</ecNumber>
    </recommendedName>
</protein>
<organism>
    <name type="scientific">Maricaulis maris (strain MCS10)</name>
    <name type="common">Caulobacter maris</name>
    <dbReference type="NCBI Taxonomy" id="394221"/>
    <lineage>
        <taxon>Bacteria</taxon>
        <taxon>Pseudomonadati</taxon>
        <taxon>Pseudomonadota</taxon>
        <taxon>Alphaproteobacteria</taxon>
        <taxon>Maricaulales</taxon>
        <taxon>Maricaulaceae</taxon>
        <taxon>Maricaulis</taxon>
    </lineage>
</organism>